<gene>
    <name evidence="1" type="primary">frr</name>
    <name type="ordered locus">OTBS_2158</name>
</gene>
<feature type="chain" id="PRO_1000003216" description="Ribosome-recycling factor">
    <location>
        <begin position="1"/>
        <end position="187"/>
    </location>
</feature>
<protein>
    <recommendedName>
        <fullName evidence="1">Ribosome-recycling factor</fullName>
        <shortName evidence="1">RRF</shortName>
    </recommendedName>
    <alternativeName>
        <fullName evidence="1">Ribosome-releasing factor</fullName>
    </alternativeName>
</protein>
<evidence type="ECO:0000255" key="1">
    <source>
        <dbReference type="HAMAP-Rule" id="MF_00040"/>
    </source>
</evidence>
<proteinExistence type="inferred from homology"/>
<sequence>MNHEELINSLTKKMNGALQVLDADLKGLRVGQASAYFLDPVQVEAYNSRVPILQVATISVSDTKTILVQVWDKSLVKAVKKAIMEANLGVSIISDDNQIIRLQLPIPSEERRKELVKIAHKYQEKSKIIVRNIRRDGIELIKQMEQNTECSKDEAHIYSKEIQELTDKYCDKIDKIIKLKEQDIINL</sequence>
<accession>A5CFN3</accession>
<name>RRF_ORITB</name>
<organism>
    <name type="scientific">Orientia tsutsugamushi (strain Boryong)</name>
    <name type="common">Rickettsia tsutsugamushi</name>
    <dbReference type="NCBI Taxonomy" id="357244"/>
    <lineage>
        <taxon>Bacteria</taxon>
        <taxon>Pseudomonadati</taxon>
        <taxon>Pseudomonadota</taxon>
        <taxon>Alphaproteobacteria</taxon>
        <taxon>Rickettsiales</taxon>
        <taxon>Rickettsiaceae</taxon>
        <taxon>Rickettsieae</taxon>
        <taxon>Orientia</taxon>
    </lineage>
</organism>
<dbReference type="EMBL" id="AM494475">
    <property type="protein sequence ID" value="CAM81253.1"/>
    <property type="molecule type" value="Genomic_DNA"/>
</dbReference>
<dbReference type="RefSeq" id="WP_011945174.1">
    <property type="nucleotide sequence ID" value="NC_009488.1"/>
</dbReference>
<dbReference type="SMR" id="A5CFN3"/>
<dbReference type="KEGG" id="ots:OTBS_2158"/>
<dbReference type="eggNOG" id="COG0233">
    <property type="taxonomic scope" value="Bacteria"/>
</dbReference>
<dbReference type="HOGENOM" id="CLU_073981_2_1_5"/>
<dbReference type="Proteomes" id="UP000001565">
    <property type="component" value="Chromosome"/>
</dbReference>
<dbReference type="GO" id="GO:0005829">
    <property type="term" value="C:cytosol"/>
    <property type="evidence" value="ECO:0007669"/>
    <property type="project" value="GOC"/>
</dbReference>
<dbReference type="GO" id="GO:0043023">
    <property type="term" value="F:ribosomal large subunit binding"/>
    <property type="evidence" value="ECO:0007669"/>
    <property type="project" value="TreeGrafter"/>
</dbReference>
<dbReference type="GO" id="GO:0002184">
    <property type="term" value="P:cytoplasmic translational termination"/>
    <property type="evidence" value="ECO:0007669"/>
    <property type="project" value="TreeGrafter"/>
</dbReference>
<dbReference type="FunFam" id="1.10.132.20:FF:000001">
    <property type="entry name" value="Ribosome-recycling factor"/>
    <property type="match status" value="1"/>
</dbReference>
<dbReference type="FunFam" id="3.30.1360.40:FF:000001">
    <property type="entry name" value="Ribosome-recycling factor"/>
    <property type="match status" value="1"/>
</dbReference>
<dbReference type="Gene3D" id="3.30.1360.40">
    <property type="match status" value="1"/>
</dbReference>
<dbReference type="Gene3D" id="1.10.132.20">
    <property type="entry name" value="Ribosome-recycling factor"/>
    <property type="match status" value="1"/>
</dbReference>
<dbReference type="HAMAP" id="MF_00040">
    <property type="entry name" value="RRF"/>
    <property type="match status" value="1"/>
</dbReference>
<dbReference type="InterPro" id="IPR002661">
    <property type="entry name" value="Ribosome_recyc_fac"/>
</dbReference>
<dbReference type="InterPro" id="IPR023584">
    <property type="entry name" value="Ribosome_recyc_fac_dom"/>
</dbReference>
<dbReference type="InterPro" id="IPR036191">
    <property type="entry name" value="RRF_sf"/>
</dbReference>
<dbReference type="NCBIfam" id="TIGR00496">
    <property type="entry name" value="frr"/>
    <property type="match status" value="1"/>
</dbReference>
<dbReference type="PANTHER" id="PTHR20982:SF3">
    <property type="entry name" value="MITOCHONDRIAL RIBOSOME RECYCLING FACTOR PSEUDO 1"/>
    <property type="match status" value="1"/>
</dbReference>
<dbReference type="PANTHER" id="PTHR20982">
    <property type="entry name" value="RIBOSOME RECYCLING FACTOR"/>
    <property type="match status" value="1"/>
</dbReference>
<dbReference type="Pfam" id="PF01765">
    <property type="entry name" value="RRF"/>
    <property type="match status" value="1"/>
</dbReference>
<dbReference type="SUPFAM" id="SSF55194">
    <property type="entry name" value="Ribosome recycling factor, RRF"/>
    <property type="match status" value="1"/>
</dbReference>
<comment type="function">
    <text evidence="1">Responsible for the release of ribosomes from messenger RNA at the termination of protein biosynthesis. May increase the efficiency of translation by recycling ribosomes from one round of translation to another.</text>
</comment>
<comment type="subcellular location">
    <subcellularLocation>
        <location evidence="1">Cytoplasm</location>
    </subcellularLocation>
</comment>
<comment type="similarity">
    <text evidence="1">Belongs to the RRF family.</text>
</comment>
<keyword id="KW-0963">Cytoplasm</keyword>
<keyword id="KW-0648">Protein biosynthesis</keyword>
<keyword id="KW-1185">Reference proteome</keyword>
<reference key="1">
    <citation type="journal article" date="2007" name="Proc. Natl. Acad. Sci. U.S.A.">
        <title>The Orientia tsutsugamushi genome reveals massive proliferation of conjugative type IV secretion system and host-cell interaction genes.</title>
        <authorList>
            <person name="Cho N.-H."/>
            <person name="Kim H.-R."/>
            <person name="Lee J.-H."/>
            <person name="Kim S.-Y."/>
            <person name="Kim J."/>
            <person name="Cha S."/>
            <person name="Kim S.-Y."/>
            <person name="Darby A.C."/>
            <person name="Fuxelius H.-H."/>
            <person name="Yin J."/>
            <person name="Kim J.H."/>
            <person name="Kim J."/>
            <person name="Lee S.J."/>
            <person name="Koh Y.-S."/>
            <person name="Jang W.-J."/>
            <person name="Park K.-H."/>
            <person name="Andersson S.G.E."/>
            <person name="Choi M.-S."/>
            <person name="Kim I.-S."/>
        </authorList>
    </citation>
    <scope>NUCLEOTIDE SEQUENCE [LARGE SCALE GENOMIC DNA]</scope>
    <source>
        <strain>Boryong</strain>
    </source>
</reference>